<accession>A9NDX8</accession>
<sequence>MTTYDPSQKSLGKEKLSRIPVKIEATHTPLRKPDWIRIRLSTDSKVSQLKKLLRENHLVTVCEEASCPNLNECFGHGTATFMIMGDKCTRRCSFCDVGHGRPDPLDPEEPVNLANTVSIMSLRYVVITSVDRDDLRDGGAQHYAQCINAVREKNPGIKVEVLVPDFRGRMEKALDQLAQGLPDVFNHNIETAPRLYKQARPGADYPWSLALLQTFKKRFPGIPTKSGMMLGLGETREEVEMVMRDLRQHEVDRLTLGQYLQPTRYHMPVDRYVTPQEFQELGELAKKLGFSNVASGPLVRSSYHADLQAQGERVS</sequence>
<protein>
    <recommendedName>
        <fullName evidence="1">Lipoyl synthase</fullName>
        <ecNumber evidence="1">2.8.1.8</ecNumber>
    </recommendedName>
    <alternativeName>
        <fullName evidence="1">Lip-syn</fullName>
        <shortName evidence="1">LS</shortName>
    </alternativeName>
    <alternativeName>
        <fullName evidence="1">Lipoate synthase</fullName>
    </alternativeName>
    <alternativeName>
        <fullName evidence="1">Lipoic acid synthase</fullName>
    </alternativeName>
    <alternativeName>
        <fullName evidence="1">Sulfur insertion protein LipA</fullName>
    </alternativeName>
</protein>
<keyword id="KW-0004">4Fe-4S</keyword>
<keyword id="KW-0963">Cytoplasm</keyword>
<keyword id="KW-0408">Iron</keyword>
<keyword id="KW-0411">Iron-sulfur</keyword>
<keyword id="KW-0479">Metal-binding</keyword>
<keyword id="KW-0949">S-adenosyl-L-methionine</keyword>
<keyword id="KW-0808">Transferase</keyword>
<name>LIPA_COXBR</name>
<comment type="function">
    <text evidence="1">Catalyzes the radical-mediated insertion of two sulfur atoms into the C-6 and C-8 positions of the octanoyl moiety bound to the lipoyl domains of lipoate-dependent enzymes, thereby converting the octanoylated domains into lipoylated derivatives.</text>
</comment>
<comment type="catalytic activity">
    <reaction evidence="1">
        <text>[[Fe-S] cluster scaffold protein carrying a second [4Fe-4S](2+) cluster] + N(6)-octanoyl-L-lysyl-[protein] + 2 oxidized [2Fe-2S]-[ferredoxin] + 2 S-adenosyl-L-methionine + 4 H(+) = [[Fe-S] cluster scaffold protein] + N(6)-[(R)-dihydrolipoyl]-L-lysyl-[protein] + 4 Fe(3+) + 2 hydrogen sulfide + 2 5'-deoxyadenosine + 2 L-methionine + 2 reduced [2Fe-2S]-[ferredoxin]</text>
        <dbReference type="Rhea" id="RHEA:16585"/>
        <dbReference type="Rhea" id="RHEA-COMP:9928"/>
        <dbReference type="Rhea" id="RHEA-COMP:10000"/>
        <dbReference type="Rhea" id="RHEA-COMP:10001"/>
        <dbReference type="Rhea" id="RHEA-COMP:10475"/>
        <dbReference type="Rhea" id="RHEA-COMP:14568"/>
        <dbReference type="Rhea" id="RHEA-COMP:14569"/>
        <dbReference type="ChEBI" id="CHEBI:15378"/>
        <dbReference type="ChEBI" id="CHEBI:17319"/>
        <dbReference type="ChEBI" id="CHEBI:29034"/>
        <dbReference type="ChEBI" id="CHEBI:29919"/>
        <dbReference type="ChEBI" id="CHEBI:33722"/>
        <dbReference type="ChEBI" id="CHEBI:33737"/>
        <dbReference type="ChEBI" id="CHEBI:33738"/>
        <dbReference type="ChEBI" id="CHEBI:57844"/>
        <dbReference type="ChEBI" id="CHEBI:59789"/>
        <dbReference type="ChEBI" id="CHEBI:78809"/>
        <dbReference type="ChEBI" id="CHEBI:83100"/>
        <dbReference type="EC" id="2.8.1.8"/>
    </reaction>
</comment>
<comment type="cofactor">
    <cofactor evidence="1">
        <name>[4Fe-4S] cluster</name>
        <dbReference type="ChEBI" id="CHEBI:49883"/>
    </cofactor>
    <text evidence="1">Binds 2 [4Fe-4S] clusters per subunit. One cluster is coordinated with 3 cysteines and an exchangeable S-adenosyl-L-methionine.</text>
</comment>
<comment type="pathway">
    <text evidence="1">Protein modification; protein lipoylation via endogenous pathway; protein N(6)-(lipoyl)lysine from octanoyl-[acyl-carrier-protein]: step 2/2.</text>
</comment>
<comment type="subcellular location">
    <subcellularLocation>
        <location evidence="1">Cytoplasm</location>
    </subcellularLocation>
</comment>
<comment type="similarity">
    <text evidence="1">Belongs to the radical SAM superfamily. Lipoyl synthase family.</text>
</comment>
<feature type="chain" id="PRO_1000077954" description="Lipoyl synthase">
    <location>
        <begin position="1"/>
        <end position="315"/>
    </location>
</feature>
<feature type="domain" description="Radical SAM core" evidence="2">
    <location>
        <begin position="73"/>
        <end position="291"/>
    </location>
</feature>
<feature type="binding site" evidence="1">
    <location>
        <position position="62"/>
    </location>
    <ligand>
        <name>[4Fe-4S] cluster</name>
        <dbReference type="ChEBI" id="CHEBI:49883"/>
        <label>1</label>
    </ligand>
</feature>
<feature type="binding site" evidence="1">
    <location>
        <position position="67"/>
    </location>
    <ligand>
        <name>[4Fe-4S] cluster</name>
        <dbReference type="ChEBI" id="CHEBI:49883"/>
        <label>1</label>
    </ligand>
</feature>
<feature type="binding site" evidence="1">
    <location>
        <position position="73"/>
    </location>
    <ligand>
        <name>[4Fe-4S] cluster</name>
        <dbReference type="ChEBI" id="CHEBI:49883"/>
        <label>1</label>
    </ligand>
</feature>
<feature type="binding site" evidence="1">
    <location>
        <position position="88"/>
    </location>
    <ligand>
        <name>[4Fe-4S] cluster</name>
        <dbReference type="ChEBI" id="CHEBI:49883"/>
        <label>2</label>
        <note>4Fe-4S-S-AdoMet</note>
    </ligand>
</feature>
<feature type="binding site" evidence="1">
    <location>
        <position position="92"/>
    </location>
    <ligand>
        <name>[4Fe-4S] cluster</name>
        <dbReference type="ChEBI" id="CHEBI:49883"/>
        <label>2</label>
        <note>4Fe-4S-S-AdoMet</note>
    </ligand>
</feature>
<feature type="binding site" evidence="1">
    <location>
        <position position="95"/>
    </location>
    <ligand>
        <name>[4Fe-4S] cluster</name>
        <dbReference type="ChEBI" id="CHEBI:49883"/>
        <label>2</label>
        <note>4Fe-4S-S-AdoMet</note>
    </ligand>
</feature>
<feature type="binding site" evidence="1">
    <location>
        <position position="302"/>
    </location>
    <ligand>
        <name>[4Fe-4S] cluster</name>
        <dbReference type="ChEBI" id="CHEBI:49883"/>
        <label>1</label>
    </ligand>
</feature>
<evidence type="ECO:0000255" key="1">
    <source>
        <dbReference type="HAMAP-Rule" id="MF_00206"/>
    </source>
</evidence>
<evidence type="ECO:0000255" key="2">
    <source>
        <dbReference type="PROSITE-ProRule" id="PRU01266"/>
    </source>
</evidence>
<dbReference type="EC" id="2.8.1.8" evidence="1"/>
<dbReference type="EMBL" id="CP000890">
    <property type="protein sequence ID" value="ABX77392.1"/>
    <property type="molecule type" value="Genomic_DNA"/>
</dbReference>
<dbReference type="RefSeq" id="WP_010958112.1">
    <property type="nucleotide sequence ID" value="NC_010117.1"/>
</dbReference>
<dbReference type="SMR" id="A9NDX8"/>
<dbReference type="KEGG" id="cbs:COXBURSA331_A1414"/>
<dbReference type="HOGENOM" id="CLU_033144_2_1_6"/>
<dbReference type="UniPathway" id="UPA00538">
    <property type="reaction ID" value="UER00593"/>
</dbReference>
<dbReference type="GO" id="GO:0005737">
    <property type="term" value="C:cytoplasm"/>
    <property type="evidence" value="ECO:0007669"/>
    <property type="project" value="UniProtKB-SubCell"/>
</dbReference>
<dbReference type="GO" id="GO:0051539">
    <property type="term" value="F:4 iron, 4 sulfur cluster binding"/>
    <property type="evidence" value="ECO:0007669"/>
    <property type="project" value="UniProtKB-UniRule"/>
</dbReference>
<dbReference type="GO" id="GO:0016992">
    <property type="term" value="F:lipoate synthase activity"/>
    <property type="evidence" value="ECO:0007669"/>
    <property type="project" value="UniProtKB-UniRule"/>
</dbReference>
<dbReference type="GO" id="GO:0046872">
    <property type="term" value="F:metal ion binding"/>
    <property type="evidence" value="ECO:0007669"/>
    <property type="project" value="UniProtKB-KW"/>
</dbReference>
<dbReference type="CDD" id="cd01335">
    <property type="entry name" value="Radical_SAM"/>
    <property type="match status" value="1"/>
</dbReference>
<dbReference type="FunFam" id="3.20.20.70:FF:000040">
    <property type="entry name" value="Lipoyl synthase"/>
    <property type="match status" value="1"/>
</dbReference>
<dbReference type="Gene3D" id="3.20.20.70">
    <property type="entry name" value="Aldolase class I"/>
    <property type="match status" value="1"/>
</dbReference>
<dbReference type="HAMAP" id="MF_00206">
    <property type="entry name" value="Lipoyl_synth"/>
    <property type="match status" value="1"/>
</dbReference>
<dbReference type="InterPro" id="IPR013785">
    <property type="entry name" value="Aldolase_TIM"/>
</dbReference>
<dbReference type="InterPro" id="IPR006638">
    <property type="entry name" value="Elp3/MiaA/NifB-like_rSAM"/>
</dbReference>
<dbReference type="InterPro" id="IPR003698">
    <property type="entry name" value="Lipoyl_synth"/>
</dbReference>
<dbReference type="InterPro" id="IPR007197">
    <property type="entry name" value="rSAM"/>
</dbReference>
<dbReference type="NCBIfam" id="TIGR00510">
    <property type="entry name" value="lipA"/>
    <property type="match status" value="1"/>
</dbReference>
<dbReference type="NCBIfam" id="NF004019">
    <property type="entry name" value="PRK05481.1"/>
    <property type="match status" value="1"/>
</dbReference>
<dbReference type="NCBIfam" id="NF009544">
    <property type="entry name" value="PRK12928.1"/>
    <property type="match status" value="1"/>
</dbReference>
<dbReference type="PANTHER" id="PTHR10949">
    <property type="entry name" value="LIPOYL SYNTHASE"/>
    <property type="match status" value="1"/>
</dbReference>
<dbReference type="PANTHER" id="PTHR10949:SF0">
    <property type="entry name" value="LIPOYL SYNTHASE, MITOCHONDRIAL"/>
    <property type="match status" value="1"/>
</dbReference>
<dbReference type="Pfam" id="PF04055">
    <property type="entry name" value="Radical_SAM"/>
    <property type="match status" value="1"/>
</dbReference>
<dbReference type="PIRSF" id="PIRSF005963">
    <property type="entry name" value="Lipoyl_synth"/>
    <property type="match status" value="1"/>
</dbReference>
<dbReference type="SFLD" id="SFLDF00271">
    <property type="entry name" value="lipoyl_synthase"/>
    <property type="match status" value="1"/>
</dbReference>
<dbReference type="SFLD" id="SFLDS00029">
    <property type="entry name" value="Radical_SAM"/>
    <property type="match status" value="1"/>
</dbReference>
<dbReference type="SMART" id="SM00729">
    <property type="entry name" value="Elp3"/>
    <property type="match status" value="1"/>
</dbReference>
<dbReference type="SUPFAM" id="SSF102114">
    <property type="entry name" value="Radical SAM enzymes"/>
    <property type="match status" value="1"/>
</dbReference>
<dbReference type="PROSITE" id="PS51918">
    <property type="entry name" value="RADICAL_SAM"/>
    <property type="match status" value="1"/>
</dbReference>
<gene>
    <name evidence="1" type="primary">lipA</name>
    <name type="ordered locus">COXBURSA331_A1414</name>
</gene>
<proteinExistence type="inferred from homology"/>
<reference key="1">
    <citation type="submission" date="2007-11" db="EMBL/GenBank/DDBJ databases">
        <title>Genome sequencing of phylogenetically and phenotypically diverse Coxiella burnetii isolates.</title>
        <authorList>
            <person name="Seshadri R."/>
            <person name="Samuel J.E."/>
        </authorList>
    </citation>
    <scope>NUCLEOTIDE SEQUENCE [LARGE SCALE GENOMIC DNA]</scope>
    <source>
        <strain>RSA 331 / Henzerling II</strain>
    </source>
</reference>
<organism>
    <name type="scientific">Coxiella burnetii (strain RSA 331 / Henzerling II)</name>
    <dbReference type="NCBI Taxonomy" id="360115"/>
    <lineage>
        <taxon>Bacteria</taxon>
        <taxon>Pseudomonadati</taxon>
        <taxon>Pseudomonadota</taxon>
        <taxon>Gammaproteobacteria</taxon>
        <taxon>Legionellales</taxon>
        <taxon>Coxiellaceae</taxon>
        <taxon>Coxiella</taxon>
    </lineage>
</organism>